<sequence length="222" mass="24905">MKKKQQSSAKFAVILTVVVVVLLAAIVIINNKTEQGNDAVSGQPSIKGQPVLGKDDAPVTVVEFGDYKCPSCKVFNSDIFPKIQKDFIDKGDVKFSFVNVMFHGKGSRLAALASEEVWKEDPDSFWDFHEKLFEKQPDTEQEWVTPGLLGDLAKSTTKIKPETLKENLDKETFASQVEKDSDLNQKMNIQATPTIYVNDKVIKNFADYDEIKETIEKELKGK</sequence>
<organism>
    <name type="scientific">Bacillus subtilis (strain 168)</name>
    <dbReference type="NCBI Taxonomy" id="224308"/>
    <lineage>
        <taxon>Bacteria</taxon>
        <taxon>Bacillati</taxon>
        <taxon>Bacillota</taxon>
        <taxon>Bacilli</taxon>
        <taxon>Bacillales</taxon>
        <taxon>Bacillaceae</taxon>
        <taxon>Bacillus</taxon>
    </lineage>
</organism>
<feature type="signal peptide" evidence="1">
    <location>
        <begin position="1"/>
        <end position="36"/>
    </location>
</feature>
<feature type="chain" id="PRO_0000034272" description="Disulfide bond formation protein D">
    <location>
        <begin position="37"/>
        <end position="222"/>
    </location>
</feature>
<feature type="domain" description="Thioredoxin" evidence="2">
    <location>
        <begin position="37"/>
        <end position="220"/>
    </location>
</feature>
<feature type="disulfide bond" description="Redox-active" evidence="2">
    <location>
        <begin position="69"/>
        <end position="72"/>
    </location>
</feature>
<feature type="mutagenesis site" description="Partially restores cytochrome c synthesis in a CcdA-deficient mutant, possibly because the bacteria can no longer oxidize the 2 heme-binding thiol groups in apocytochrome c." evidence="4">
    <original>H</original>
    <variation>P</variation>
    <location>
        <position position="129"/>
    </location>
</feature>
<feature type="strand" evidence="8">
    <location>
        <begin position="51"/>
        <end position="53"/>
    </location>
</feature>
<feature type="strand" evidence="8">
    <location>
        <begin position="58"/>
        <end position="65"/>
    </location>
</feature>
<feature type="helix" evidence="8">
    <location>
        <begin position="70"/>
        <end position="78"/>
    </location>
</feature>
<feature type="helix" evidence="8">
    <location>
        <begin position="80"/>
        <end position="86"/>
    </location>
</feature>
<feature type="turn" evidence="8">
    <location>
        <begin position="87"/>
        <end position="91"/>
    </location>
</feature>
<feature type="strand" evidence="8">
    <location>
        <begin position="92"/>
        <end position="99"/>
    </location>
</feature>
<feature type="helix" evidence="8">
    <location>
        <begin position="104"/>
        <end position="120"/>
    </location>
</feature>
<feature type="helix" evidence="8">
    <location>
        <begin position="122"/>
        <end position="124"/>
    </location>
</feature>
<feature type="helix" evidence="8">
    <location>
        <begin position="125"/>
        <end position="135"/>
    </location>
</feature>
<feature type="strand" evidence="8">
    <location>
        <begin position="138"/>
        <end position="141"/>
    </location>
</feature>
<feature type="helix" evidence="8">
    <location>
        <begin position="146"/>
        <end position="156"/>
    </location>
</feature>
<feature type="strand" evidence="8">
    <location>
        <begin position="157"/>
        <end position="159"/>
    </location>
</feature>
<feature type="helix" evidence="8">
    <location>
        <begin position="161"/>
        <end position="170"/>
    </location>
</feature>
<feature type="turn" evidence="8">
    <location>
        <begin position="171"/>
        <end position="173"/>
    </location>
</feature>
<feature type="helix" evidence="8">
    <location>
        <begin position="174"/>
        <end position="186"/>
    </location>
</feature>
<feature type="strand" evidence="8">
    <location>
        <begin position="194"/>
        <end position="197"/>
    </location>
</feature>
<feature type="helix" evidence="8">
    <location>
        <begin position="208"/>
        <end position="221"/>
    </location>
</feature>
<dbReference type="EMBL" id="AL009126">
    <property type="protein sequence ID" value="CAB15353.1"/>
    <property type="molecule type" value="Genomic_DNA"/>
</dbReference>
<dbReference type="PIR" id="C70041">
    <property type="entry name" value="C70041"/>
</dbReference>
<dbReference type="RefSeq" id="NP_391228.1">
    <property type="nucleotide sequence ID" value="NC_000964.3"/>
</dbReference>
<dbReference type="RefSeq" id="WP_003228414.1">
    <property type="nucleotide sequence ID" value="NZ_OZ025638.1"/>
</dbReference>
<dbReference type="PDB" id="3EU3">
    <property type="method" value="X-ray"/>
    <property type="resolution" value="1.50 A"/>
    <property type="chains" value="A=30-222"/>
</dbReference>
<dbReference type="PDB" id="3EU4">
    <property type="method" value="X-ray"/>
    <property type="resolution" value="2.30 A"/>
    <property type="chains" value="A=30-222"/>
</dbReference>
<dbReference type="PDB" id="3GH9">
    <property type="method" value="X-ray"/>
    <property type="resolution" value="1.69 A"/>
    <property type="chains" value="A=30-222"/>
</dbReference>
<dbReference type="PDB" id="3GHA">
    <property type="method" value="X-ray"/>
    <property type="resolution" value="1.40 A"/>
    <property type="chains" value="A=30-222"/>
</dbReference>
<dbReference type="PDBsum" id="3EU3"/>
<dbReference type="PDBsum" id="3EU4"/>
<dbReference type="PDBsum" id="3GH9"/>
<dbReference type="PDBsum" id="3GHA"/>
<dbReference type="SMR" id="O32218"/>
<dbReference type="FunCoup" id="O32218">
    <property type="interactions" value="9"/>
</dbReference>
<dbReference type="STRING" id="224308.BSU33480"/>
<dbReference type="jPOST" id="O32218"/>
<dbReference type="PaxDb" id="224308-BSU33480"/>
<dbReference type="EnsemblBacteria" id="CAB15353">
    <property type="protein sequence ID" value="CAB15353"/>
    <property type="gene ID" value="BSU_33480"/>
</dbReference>
<dbReference type="GeneID" id="936031"/>
<dbReference type="KEGG" id="bsu:BSU33480"/>
<dbReference type="PATRIC" id="fig|224308.179.peg.3633"/>
<dbReference type="eggNOG" id="COG1651">
    <property type="taxonomic scope" value="Bacteria"/>
</dbReference>
<dbReference type="InParanoid" id="O32218"/>
<dbReference type="OrthoDB" id="117402at2"/>
<dbReference type="PhylomeDB" id="O32218"/>
<dbReference type="BioCyc" id="BSUB:BSU33480-MONOMER"/>
<dbReference type="EvolutionaryTrace" id="O32218"/>
<dbReference type="PRO" id="PR:O32218"/>
<dbReference type="Proteomes" id="UP000001570">
    <property type="component" value="Chromosome"/>
</dbReference>
<dbReference type="GO" id="GO:0045121">
    <property type="term" value="C:membrane raft"/>
    <property type="evidence" value="ECO:0007669"/>
    <property type="project" value="UniProtKB-SubCell"/>
</dbReference>
<dbReference type="GO" id="GO:0005886">
    <property type="term" value="C:plasma membrane"/>
    <property type="evidence" value="ECO:0007669"/>
    <property type="project" value="UniProtKB-SubCell"/>
</dbReference>
<dbReference type="GO" id="GO:0016491">
    <property type="term" value="F:oxidoreductase activity"/>
    <property type="evidence" value="ECO:0007669"/>
    <property type="project" value="UniProtKB-KW"/>
</dbReference>
<dbReference type="GO" id="GO:0030420">
    <property type="term" value="P:establishment of competence for transformation"/>
    <property type="evidence" value="ECO:0007669"/>
    <property type="project" value="UniProtKB-KW"/>
</dbReference>
<dbReference type="Gene3D" id="3.40.30.10">
    <property type="entry name" value="Glutaredoxin"/>
    <property type="match status" value="1"/>
</dbReference>
<dbReference type="InterPro" id="IPR012336">
    <property type="entry name" value="Thioredoxin-like_fold"/>
</dbReference>
<dbReference type="InterPro" id="IPR036249">
    <property type="entry name" value="Thioredoxin-like_sf"/>
</dbReference>
<dbReference type="InterPro" id="IPR013766">
    <property type="entry name" value="Thioredoxin_domain"/>
</dbReference>
<dbReference type="PANTHER" id="PTHR13887:SF14">
    <property type="entry name" value="DISULFIDE BOND FORMATION PROTEIN D"/>
    <property type="match status" value="1"/>
</dbReference>
<dbReference type="PANTHER" id="PTHR13887">
    <property type="entry name" value="GLUTATHIONE S-TRANSFERASE KAPPA"/>
    <property type="match status" value="1"/>
</dbReference>
<dbReference type="Pfam" id="PF13462">
    <property type="entry name" value="Thioredoxin_4"/>
    <property type="match status" value="1"/>
</dbReference>
<dbReference type="SUPFAM" id="SSF52833">
    <property type="entry name" value="Thioredoxin-like"/>
    <property type="match status" value="1"/>
</dbReference>
<dbReference type="PROSITE" id="PS51352">
    <property type="entry name" value="THIOREDOXIN_2"/>
    <property type="match status" value="1"/>
</dbReference>
<name>BDBD_BACSU</name>
<evidence type="ECO:0000255" key="1"/>
<evidence type="ECO:0000255" key="2">
    <source>
        <dbReference type="PROSITE-ProRule" id="PRU00691"/>
    </source>
</evidence>
<evidence type="ECO:0000269" key="3">
    <source>
    </source>
</evidence>
<evidence type="ECO:0000269" key="4">
    <source>
    </source>
</evidence>
<evidence type="ECO:0000269" key="5">
    <source>
    </source>
</evidence>
<evidence type="ECO:0000269" key="6">
    <source>
    </source>
</evidence>
<evidence type="ECO:0000305" key="7"/>
<evidence type="ECO:0007829" key="8">
    <source>
        <dbReference type="PDB" id="3GHA"/>
    </source>
</evidence>
<gene>
    <name type="primary">bdbD</name>
    <name type="synonym">yvgV</name>
    <name type="ordered locus">BSU33480</name>
</gene>
<keyword id="KW-0002">3D-structure</keyword>
<keyword id="KW-1003">Cell membrane</keyword>
<keyword id="KW-0178">Competence</keyword>
<keyword id="KW-1015">Disulfide bond</keyword>
<keyword id="KW-0472">Membrane</keyword>
<keyword id="KW-0560">Oxidoreductase</keyword>
<keyword id="KW-0676">Redox-active center</keyword>
<keyword id="KW-1185">Reference proteome</keyword>
<keyword id="KW-0732">Signal</keyword>
<protein>
    <recommendedName>
        <fullName>Disulfide bond formation protein D</fullName>
    </recommendedName>
    <alternativeName>
        <fullName>Disulfide oxidoreductase D</fullName>
    </alternativeName>
    <alternativeName>
        <fullName>Thiol-disulfide oxidoreductase D</fullName>
    </alternativeName>
</protein>
<accession>O32218</accession>
<comment type="function">
    <text evidence="3">Required for the stabilization, possibly via formation of a disulfide bond, of the obligatory competence protein ComGC. May be required for the stability of secreted proteins with disulfide bonds. Not required for sporulation.</text>
</comment>
<comment type="subcellular location">
    <subcellularLocation>
        <location evidence="5 6">Cell membrane</location>
    </subcellularLocation>
    <subcellularLocation>
        <location evidence="5 6">Membrane raft</location>
    </subcellularLocation>
    <text evidence="5 6">Present in detergent-resistant membrane (DRM) fractions that may be equivalent to eukaryotic membrane rafts; these rafts include proteins involved in signaling, molecule trafficking and protein secretion.</text>
</comment>
<comment type="developmental stage">
    <text>A late competence gene, expression is enhanced in the presence of ComK.</text>
</comment>
<comment type="disruption phenotype">
    <text evidence="4">Cells partially restore cytochrome c oxidase activity in a CcdA-deficient mutant, possibly because the bacteria can no longer oxidize the 2 heme-binding thiol groups in apocytochrome c.</text>
</comment>
<comment type="similarity">
    <text evidence="7">Belongs to the thioredoxin family. DsbA subfamily.</text>
</comment>
<proteinExistence type="evidence at protein level"/>
<reference key="1">
    <citation type="journal article" date="1997" name="Nature">
        <title>The complete genome sequence of the Gram-positive bacterium Bacillus subtilis.</title>
        <authorList>
            <person name="Kunst F."/>
            <person name="Ogasawara N."/>
            <person name="Moszer I."/>
            <person name="Albertini A.M."/>
            <person name="Alloni G."/>
            <person name="Azevedo V."/>
            <person name="Bertero M.G."/>
            <person name="Bessieres P."/>
            <person name="Bolotin A."/>
            <person name="Borchert S."/>
            <person name="Borriss R."/>
            <person name="Boursier L."/>
            <person name="Brans A."/>
            <person name="Braun M."/>
            <person name="Brignell S.C."/>
            <person name="Bron S."/>
            <person name="Brouillet S."/>
            <person name="Bruschi C.V."/>
            <person name="Caldwell B."/>
            <person name="Capuano V."/>
            <person name="Carter N.M."/>
            <person name="Choi S.-K."/>
            <person name="Codani J.-J."/>
            <person name="Connerton I.F."/>
            <person name="Cummings N.J."/>
            <person name="Daniel R.A."/>
            <person name="Denizot F."/>
            <person name="Devine K.M."/>
            <person name="Duesterhoeft A."/>
            <person name="Ehrlich S.D."/>
            <person name="Emmerson P.T."/>
            <person name="Entian K.-D."/>
            <person name="Errington J."/>
            <person name="Fabret C."/>
            <person name="Ferrari E."/>
            <person name="Foulger D."/>
            <person name="Fritz C."/>
            <person name="Fujita M."/>
            <person name="Fujita Y."/>
            <person name="Fuma S."/>
            <person name="Galizzi A."/>
            <person name="Galleron N."/>
            <person name="Ghim S.-Y."/>
            <person name="Glaser P."/>
            <person name="Goffeau A."/>
            <person name="Golightly E.J."/>
            <person name="Grandi G."/>
            <person name="Guiseppi G."/>
            <person name="Guy B.J."/>
            <person name="Haga K."/>
            <person name="Haiech J."/>
            <person name="Harwood C.R."/>
            <person name="Henaut A."/>
            <person name="Hilbert H."/>
            <person name="Holsappel S."/>
            <person name="Hosono S."/>
            <person name="Hullo M.-F."/>
            <person name="Itaya M."/>
            <person name="Jones L.-M."/>
            <person name="Joris B."/>
            <person name="Karamata D."/>
            <person name="Kasahara Y."/>
            <person name="Klaerr-Blanchard M."/>
            <person name="Klein C."/>
            <person name="Kobayashi Y."/>
            <person name="Koetter P."/>
            <person name="Koningstein G."/>
            <person name="Krogh S."/>
            <person name="Kumano M."/>
            <person name="Kurita K."/>
            <person name="Lapidus A."/>
            <person name="Lardinois S."/>
            <person name="Lauber J."/>
            <person name="Lazarevic V."/>
            <person name="Lee S.-M."/>
            <person name="Levine A."/>
            <person name="Liu H."/>
            <person name="Masuda S."/>
            <person name="Mauel C."/>
            <person name="Medigue C."/>
            <person name="Medina N."/>
            <person name="Mellado R.P."/>
            <person name="Mizuno M."/>
            <person name="Moestl D."/>
            <person name="Nakai S."/>
            <person name="Noback M."/>
            <person name="Noone D."/>
            <person name="O'Reilly M."/>
            <person name="Ogawa K."/>
            <person name="Ogiwara A."/>
            <person name="Oudega B."/>
            <person name="Park S.-H."/>
            <person name="Parro V."/>
            <person name="Pohl T.M."/>
            <person name="Portetelle D."/>
            <person name="Porwollik S."/>
            <person name="Prescott A.M."/>
            <person name="Presecan E."/>
            <person name="Pujic P."/>
            <person name="Purnelle B."/>
            <person name="Rapoport G."/>
            <person name="Rey M."/>
            <person name="Reynolds S."/>
            <person name="Rieger M."/>
            <person name="Rivolta C."/>
            <person name="Rocha E."/>
            <person name="Roche B."/>
            <person name="Rose M."/>
            <person name="Sadaie Y."/>
            <person name="Sato T."/>
            <person name="Scanlan E."/>
            <person name="Schleich S."/>
            <person name="Schroeter R."/>
            <person name="Scoffone F."/>
            <person name="Sekiguchi J."/>
            <person name="Sekowska A."/>
            <person name="Seror S.J."/>
            <person name="Serror P."/>
            <person name="Shin B.-S."/>
            <person name="Soldo B."/>
            <person name="Sorokin A."/>
            <person name="Tacconi E."/>
            <person name="Takagi T."/>
            <person name="Takahashi H."/>
            <person name="Takemaru K."/>
            <person name="Takeuchi M."/>
            <person name="Tamakoshi A."/>
            <person name="Tanaka T."/>
            <person name="Terpstra P."/>
            <person name="Tognoni A."/>
            <person name="Tosato V."/>
            <person name="Uchiyama S."/>
            <person name="Vandenbol M."/>
            <person name="Vannier F."/>
            <person name="Vassarotti A."/>
            <person name="Viari A."/>
            <person name="Wambutt R."/>
            <person name="Wedler E."/>
            <person name="Wedler H."/>
            <person name="Weitzenegger T."/>
            <person name="Winters P."/>
            <person name="Wipat A."/>
            <person name="Yamamoto H."/>
            <person name="Yamane K."/>
            <person name="Yasumoto K."/>
            <person name="Yata K."/>
            <person name="Yoshida K."/>
            <person name="Yoshikawa H.-F."/>
            <person name="Zumstein E."/>
            <person name="Yoshikawa H."/>
            <person name="Danchin A."/>
        </authorList>
    </citation>
    <scope>NUCLEOTIDE SEQUENCE [LARGE SCALE GENOMIC DNA]</scope>
    <source>
        <strain>168</strain>
    </source>
</reference>
<reference key="2">
    <citation type="journal article" date="2002" name="J. Bacteriol.">
        <title>Mutations in the thiol-disulfide oxidoreductases BdbC and BdbD can suppress cytochrome c deficiency of CcdA-defective Bacillus subtilis cells.</title>
        <authorList>
            <person name="Erlendsson L.S."/>
            <person name="Hederstedt L."/>
        </authorList>
    </citation>
    <scope>DISRUPTION PHENOTYPE</scope>
    <scope>MUTAGENESIS OF HIS-129</scope>
    <source>
        <strain>168 / BGSC1A1</strain>
    </source>
</reference>
<reference key="3">
    <citation type="journal article" date="2002" name="J. Biol. Chem.">
        <title>The bdbDC operon of Bacillus subtilis encodes thiol-disulfide oxidoreductases required for competence development.</title>
        <authorList>
            <person name="Meima R."/>
            <person name="Eschevins C."/>
            <person name="Fillinger S."/>
            <person name="Bolhuis A."/>
            <person name="Hamoen L.W."/>
            <person name="Dorenbos R."/>
            <person name="Quax W.J."/>
            <person name="van Dijl J.M."/>
            <person name="Provvedi R."/>
            <person name="Chen I."/>
            <person name="Dubnau D."/>
            <person name="Bron S."/>
        </authorList>
    </citation>
    <scope>FUNCTION IN PRODUCTION OF COMGC</scope>
    <source>
        <strain>168</strain>
    </source>
</reference>
<reference key="4">
    <citation type="journal article" date="2010" name="Genes Dev.">
        <title>Functional microdomains in bacterial membranes.</title>
        <authorList>
            <person name="Lopez D."/>
            <person name="Kolter R."/>
        </authorList>
    </citation>
    <scope>SUBCELLULAR LOCATION</scope>
    <source>
        <strain>168 / Marburg / ATCC 6051 / DSM 10 / JCM 1465 / NBRC 13719 / NCIMB 3610 / NRRL NRS-744 / VKM B-501</strain>
    </source>
</reference>
<reference key="5">
    <citation type="journal article" date="2012" name="Mol. Microbiol.">
        <title>The biofilm formation defect of a Bacillus subtilis flotillin-defective mutant involves the protease FtsH.</title>
        <authorList>
            <person name="Yepes A."/>
            <person name="Schneider J."/>
            <person name="Mielich B."/>
            <person name="Koch G."/>
            <person name="Garcia-Betancur J.C."/>
            <person name="Ramamurthi K.S."/>
            <person name="Vlamakis H."/>
            <person name="Lopez D."/>
        </authorList>
    </citation>
    <scope>SUBCELLULAR LOCATION</scope>
    <source>
        <strain>168 / Marburg / ATCC 6051 / DSM 10 / JCM 1465 / NBRC 13719 / NCIMB 3610 / NRRL NRS-744 / VKM B-501</strain>
    </source>
</reference>